<evidence type="ECO:0000255" key="1"/>
<evidence type="ECO:0000305" key="2"/>
<proteinExistence type="predicted"/>
<reference key="1">
    <citation type="journal article" date="1996" name="Yeast">
        <title>Sequence analysis of a 40.7 kb segment from the left arm of yeast chromosome X reveals 14 known genes and 13 new open reading frames including homologues of genes clustered on the right arm of chromosome XI.</title>
        <authorList>
            <person name="Katsoulou C."/>
            <person name="Tzermia M."/>
            <person name="Tavernarakis N."/>
            <person name="Alexandraki D."/>
        </authorList>
    </citation>
    <scope>NUCLEOTIDE SEQUENCE [GENOMIC DNA]</scope>
    <source>
        <strain>ATCC 96604 / S288c / FY1679</strain>
    </source>
</reference>
<reference key="2">
    <citation type="journal article" date="1996" name="EMBO J.">
        <title>Complete nucleotide sequence of Saccharomyces cerevisiae chromosome X.</title>
        <authorList>
            <person name="Galibert F."/>
            <person name="Alexandraki D."/>
            <person name="Baur A."/>
            <person name="Boles E."/>
            <person name="Chalwatzis N."/>
            <person name="Chuat J.-C."/>
            <person name="Coster F."/>
            <person name="Cziepluch C."/>
            <person name="de Haan M."/>
            <person name="Domdey H."/>
            <person name="Durand P."/>
            <person name="Entian K.-D."/>
            <person name="Gatius M."/>
            <person name="Goffeau A."/>
            <person name="Grivell L.A."/>
            <person name="Hennemann A."/>
            <person name="Herbert C.J."/>
            <person name="Heumann K."/>
            <person name="Hilger F."/>
            <person name="Hollenberg C.P."/>
            <person name="Huang M.-E."/>
            <person name="Jacq C."/>
            <person name="Jauniaux J.-C."/>
            <person name="Katsoulou C."/>
            <person name="Kirchrath L."/>
            <person name="Kleine K."/>
            <person name="Kordes E."/>
            <person name="Koetter P."/>
            <person name="Liebl S."/>
            <person name="Louis E.J."/>
            <person name="Manus V."/>
            <person name="Mewes H.-W."/>
            <person name="Miosga T."/>
            <person name="Obermaier B."/>
            <person name="Perea J."/>
            <person name="Pohl T.M."/>
            <person name="Portetelle D."/>
            <person name="Pujol A."/>
            <person name="Purnelle B."/>
            <person name="Ramezani Rad M."/>
            <person name="Rasmussen S.W."/>
            <person name="Rose M."/>
            <person name="Rossau R."/>
            <person name="Schaaff-Gerstenschlaeger I."/>
            <person name="Smits P.H.M."/>
            <person name="Scarcez T."/>
            <person name="Soriano N."/>
            <person name="To Van D."/>
            <person name="Tzermia M."/>
            <person name="Van Broekhoven A."/>
            <person name="Vandenbol M."/>
            <person name="Wedler H."/>
            <person name="von Wettstein D."/>
            <person name="Wambutt R."/>
            <person name="Zagulski M."/>
            <person name="Zollner A."/>
            <person name="Karpfinger-Hartl L."/>
        </authorList>
    </citation>
    <scope>NUCLEOTIDE SEQUENCE [LARGE SCALE GENOMIC DNA]</scope>
    <source>
        <strain>ATCC 204508 / S288c</strain>
    </source>
</reference>
<reference key="3">
    <citation type="journal article" date="2014" name="G3 (Bethesda)">
        <title>The reference genome sequence of Saccharomyces cerevisiae: Then and now.</title>
        <authorList>
            <person name="Engel S.R."/>
            <person name="Dietrich F.S."/>
            <person name="Fisk D.G."/>
            <person name="Binkley G."/>
            <person name="Balakrishnan R."/>
            <person name="Costanzo M.C."/>
            <person name="Dwight S.S."/>
            <person name="Hitz B.C."/>
            <person name="Karra K."/>
            <person name="Nash R.S."/>
            <person name="Weng S."/>
            <person name="Wong E.D."/>
            <person name="Lloyd P."/>
            <person name="Skrzypek M.S."/>
            <person name="Miyasato S.R."/>
            <person name="Simison M."/>
            <person name="Cherry J.M."/>
        </authorList>
    </citation>
    <scope>GENOME REANNOTATION</scope>
    <source>
        <strain>ATCC 204508 / S288c</strain>
    </source>
</reference>
<protein>
    <recommendedName>
        <fullName>Uncharacterized protein YJL132W</fullName>
    </recommendedName>
</protein>
<dbReference type="EMBL" id="X87371">
    <property type="protein sequence ID" value="CAA60823.1"/>
    <property type="molecule type" value="Genomic_DNA"/>
</dbReference>
<dbReference type="EMBL" id="Z49407">
    <property type="protein sequence ID" value="CAA89427.1"/>
    <property type="molecule type" value="Genomic_DNA"/>
</dbReference>
<dbReference type="EMBL" id="BK006943">
    <property type="protein sequence ID" value="DAA08669.1"/>
    <property type="molecule type" value="Genomic_DNA"/>
</dbReference>
<dbReference type="PIR" id="S55180">
    <property type="entry name" value="S55180"/>
</dbReference>
<dbReference type="RefSeq" id="NP_012403.1">
    <property type="nucleotide sequence ID" value="NM_001181565.1"/>
</dbReference>
<dbReference type="BioGRID" id="33624">
    <property type="interactions" value="60"/>
</dbReference>
<dbReference type="FunCoup" id="P47014">
    <property type="interactions" value="81"/>
</dbReference>
<dbReference type="MINT" id="P47014"/>
<dbReference type="STRING" id="4932.YJL132W"/>
<dbReference type="PaxDb" id="4932-YJL132W"/>
<dbReference type="PeptideAtlas" id="P47014"/>
<dbReference type="EnsemblFungi" id="YJL132W_mRNA">
    <property type="protein sequence ID" value="YJL132W"/>
    <property type="gene ID" value="YJL132W"/>
</dbReference>
<dbReference type="GeneID" id="853309"/>
<dbReference type="KEGG" id="sce:YJL132W"/>
<dbReference type="AGR" id="SGD:S000003668"/>
<dbReference type="SGD" id="S000003668">
    <property type="gene designation" value="YJL132W"/>
</dbReference>
<dbReference type="VEuPathDB" id="FungiDB:YJL132W"/>
<dbReference type="eggNOG" id="ENOG502QVNQ">
    <property type="taxonomic scope" value="Eukaryota"/>
</dbReference>
<dbReference type="GeneTree" id="ENSGT00390000013522"/>
<dbReference type="HOGENOM" id="CLU_021704_0_0_1"/>
<dbReference type="InParanoid" id="P47014"/>
<dbReference type="OMA" id="FFPDALY"/>
<dbReference type="OrthoDB" id="5317514at2759"/>
<dbReference type="BioCyc" id="YEAST:G3O-31581-MONOMER"/>
<dbReference type="Reactome" id="R-SCE-163125">
    <property type="pathway name" value="Post-translational modification: synthesis of GPI-anchored proteins"/>
</dbReference>
<dbReference type="BioGRID-ORCS" id="853309">
    <property type="hits" value="0 hits in 10 CRISPR screens"/>
</dbReference>
<dbReference type="PRO" id="PR:P47014"/>
<dbReference type="Proteomes" id="UP000002311">
    <property type="component" value="Chromosome X"/>
</dbReference>
<dbReference type="RNAct" id="P47014">
    <property type="molecule type" value="protein"/>
</dbReference>
<dbReference type="GO" id="GO:0031012">
    <property type="term" value="C:extracellular matrix"/>
    <property type="evidence" value="ECO:0000318"/>
    <property type="project" value="GO_Central"/>
</dbReference>
<dbReference type="GO" id="GO:0005615">
    <property type="term" value="C:extracellular space"/>
    <property type="evidence" value="ECO:0000318"/>
    <property type="project" value="GO_Central"/>
</dbReference>
<dbReference type="GO" id="GO:0000324">
    <property type="term" value="C:fungal-type vacuole"/>
    <property type="evidence" value="ECO:0007005"/>
    <property type="project" value="SGD"/>
</dbReference>
<dbReference type="GO" id="GO:0016020">
    <property type="term" value="C:membrane"/>
    <property type="evidence" value="ECO:0000314"/>
    <property type="project" value="SGD"/>
</dbReference>
<dbReference type="GO" id="GO:0004621">
    <property type="term" value="F:glycosylphosphatidylinositol phospholipase D activity"/>
    <property type="evidence" value="ECO:0000318"/>
    <property type="project" value="GO_Central"/>
</dbReference>
<dbReference type="Gene3D" id="2.130.10.130">
    <property type="entry name" value="Integrin alpha, N-terminal"/>
    <property type="match status" value="1"/>
</dbReference>
<dbReference type="InterPro" id="IPR013519">
    <property type="entry name" value="Int_alpha_beta-p"/>
</dbReference>
<dbReference type="InterPro" id="IPR028994">
    <property type="entry name" value="Integrin_alpha_N"/>
</dbReference>
<dbReference type="InterPro" id="IPR029002">
    <property type="entry name" value="PLPC/GPLD1"/>
</dbReference>
<dbReference type="PANTHER" id="PTHR23221">
    <property type="entry name" value="GLYCOSYLPHOSPHATIDYLINOSITOL PHOSPHOLIPASE D"/>
    <property type="match status" value="1"/>
</dbReference>
<dbReference type="PANTHER" id="PTHR23221:SF7">
    <property type="entry name" value="PHOSPHATIDYLINOSITOL-GLYCAN-SPECIFIC PHOSPHOLIPASE D"/>
    <property type="match status" value="1"/>
</dbReference>
<dbReference type="Pfam" id="PF00882">
    <property type="entry name" value="Zn_dep_PLPC"/>
    <property type="match status" value="1"/>
</dbReference>
<dbReference type="SMART" id="SM00191">
    <property type="entry name" value="Int_alpha"/>
    <property type="match status" value="1"/>
</dbReference>
<sequence>MSIISSWLLVSIICLTTSIVTKLQAAGVTTHLFYLTRGAPLSLKENYYPWLKAGSFFPDALYSCAPSNKDWSDFAEFTHWPNFLMIAVSYWQQKYGQNDRLRGTHGSLALKSFLIGVFTHQIVDVSWHSLVTDYRMHGLLRVLSETEFDGDIETAHTFLDVMGEFLTLNNVIRDSNNNENWDFLTRSDWKLPREEDLMEIIRNAGLSKEKLSYAELEFCVKRGMAAAISEGYLFRSQRNQLLTNIYSTSPRANDLILNHWLGGQSNLVAMLQRCVPFFETLFHDENTNEAQAEELRLCANLPPVSQKRINARPLVSSLKARKGNSHIVVSPMKSFSDFGTSLTMGKFREDNKDYLAVSAPLEDTVGAIYIVPWDILTVARKEDFSILQPITAMYGSKVGTYKASDVDYLLVSQPGTCTIDFYFKGVKILTIKDETTEEAHQLQFAVTGNFYDDKIPDLVVSSPSYGANETGIATFIPGSSIISYLTNSDKYQVVDISTFKGVINLDGYPMKIPFQHFGATIQISDTTDKQKLIYITCQSLGTVFVYSSNDLHDLSIPIYYITKNGVIPAKDSDHVEWHIIPSKEHGMFGAAIYSWNFEGMSFVAVSQPMFDTVFIYIEKSGQIEFFLKLVLKIKTKSDSIPDEFGSSLLFNDEEKKLYVSSPGSFDARGSIWKISMDELLKAGNDPKRKTLLINNLRHLMLINPDKSSKGVSNFGNSMILGPQNHLIVGIPQYGYGNFDHMQLTGRILVL</sequence>
<feature type="chain" id="PRO_0000203038" description="Uncharacterized protein YJL132W">
    <location>
        <begin position="1"/>
        <end position="750"/>
    </location>
</feature>
<feature type="transmembrane region" description="Helical" evidence="1">
    <location>
        <begin position="1"/>
        <end position="21"/>
    </location>
</feature>
<feature type="transmembrane region" description="Helical" evidence="1">
    <location>
        <begin position="465"/>
        <end position="485"/>
    </location>
</feature>
<feature type="transmembrane region" description="Helical" evidence="1">
    <location>
        <begin position="586"/>
        <end position="606"/>
    </location>
</feature>
<gene>
    <name type="ordered locus">YJL132W</name>
    <name type="ORF">J0678</name>
</gene>
<organism>
    <name type="scientific">Saccharomyces cerevisiae (strain ATCC 204508 / S288c)</name>
    <name type="common">Baker's yeast</name>
    <dbReference type="NCBI Taxonomy" id="559292"/>
    <lineage>
        <taxon>Eukaryota</taxon>
        <taxon>Fungi</taxon>
        <taxon>Dikarya</taxon>
        <taxon>Ascomycota</taxon>
        <taxon>Saccharomycotina</taxon>
        <taxon>Saccharomycetes</taxon>
        <taxon>Saccharomycetales</taxon>
        <taxon>Saccharomycetaceae</taxon>
        <taxon>Saccharomyces</taxon>
    </lineage>
</organism>
<accession>P47014</accession>
<accession>D6VW53</accession>
<keyword id="KW-0472">Membrane</keyword>
<keyword id="KW-1185">Reference proteome</keyword>
<keyword id="KW-0812">Transmembrane</keyword>
<keyword id="KW-1133">Transmembrane helix</keyword>
<name>YJN2_YEAST</name>
<comment type="subcellular location">
    <subcellularLocation>
        <location evidence="2">Membrane</location>
        <topology evidence="2">Multi-pass membrane protein</topology>
    </subcellularLocation>
</comment>